<feature type="chain" id="PRO_1000049190" description="Homoserine kinase">
    <location>
        <begin position="1"/>
        <end position="281"/>
    </location>
</feature>
<feature type="binding site" evidence="1">
    <location>
        <begin position="83"/>
        <end position="93"/>
    </location>
    <ligand>
        <name>ATP</name>
        <dbReference type="ChEBI" id="CHEBI:30616"/>
    </ligand>
</feature>
<reference key="1">
    <citation type="submission" date="2007-05" db="EMBL/GenBank/DDBJ databases">
        <title>Complete sequence of Thermotoga petrophila RKU-1.</title>
        <authorList>
            <consortium name="US DOE Joint Genome Institute"/>
            <person name="Copeland A."/>
            <person name="Lucas S."/>
            <person name="Lapidus A."/>
            <person name="Barry K."/>
            <person name="Glavina del Rio T."/>
            <person name="Dalin E."/>
            <person name="Tice H."/>
            <person name="Pitluck S."/>
            <person name="Sims D."/>
            <person name="Brettin T."/>
            <person name="Bruce D."/>
            <person name="Detter J.C."/>
            <person name="Han C."/>
            <person name="Tapia R."/>
            <person name="Schmutz J."/>
            <person name="Larimer F."/>
            <person name="Land M."/>
            <person name="Hauser L."/>
            <person name="Kyrpides N."/>
            <person name="Mikhailova N."/>
            <person name="Nelson K."/>
            <person name="Gogarten J.P."/>
            <person name="Noll K."/>
            <person name="Richardson P."/>
        </authorList>
    </citation>
    <scope>NUCLEOTIDE SEQUENCE [LARGE SCALE GENOMIC DNA]</scope>
    <source>
        <strain>ATCC BAA-488 / DSM 13995 / JCM 10881 / RKU-1</strain>
    </source>
</reference>
<accession>A5IJN0</accession>
<evidence type="ECO:0000255" key="1">
    <source>
        <dbReference type="HAMAP-Rule" id="MF_00384"/>
    </source>
</evidence>
<keyword id="KW-0028">Amino-acid biosynthesis</keyword>
<keyword id="KW-0067">ATP-binding</keyword>
<keyword id="KW-0963">Cytoplasm</keyword>
<keyword id="KW-0418">Kinase</keyword>
<keyword id="KW-0547">Nucleotide-binding</keyword>
<keyword id="KW-0791">Threonine biosynthesis</keyword>
<keyword id="KW-0808">Transferase</keyword>
<gene>
    <name evidence="1" type="primary">thrB</name>
    <name type="ordered locus">Tpet_0375</name>
</gene>
<name>KHSE_THEP1</name>
<organism>
    <name type="scientific">Thermotoga petrophila (strain ATCC BAA-488 / DSM 13995 / JCM 10881 / RKU-1)</name>
    <dbReference type="NCBI Taxonomy" id="390874"/>
    <lineage>
        <taxon>Bacteria</taxon>
        <taxon>Thermotogati</taxon>
        <taxon>Thermotogota</taxon>
        <taxon>Thermotogae</taxon>
        <taxon>Thermotogales</taxon>
        <taxon>Thermotogaceae</taxon>
        <taxon>Thermotoga</taxon>
    </lineage>
</organism>
<comment type="function">
    <text evidence="1">Catalyzes the ATP-dependent phosphorylation of L-homoserine to L-homoserine phosphate.</text>
</comment>
<comment type="catalytic activity">
    <reaction evidence="1">
        <text>L-homoserine + ATP = O-phospho-L-homoserine + ADP + H(+)</text>
        <dbReference type="Rhea" id="RHEA:13985"/>
        <dbReference type="ChEBI" id="CHEBI:15378"/>
        <dbReference type="ChEBI" id="CHEBI:30616"/>
        <dbReference type="ChEBI" id="CHEBI:57476"/>
        <dbReference type="ChEBI" id="CHEBI:57590"/>
        <dbReference type="ChEBI" id="CHEBI:456216"/>
        <dbReference type="EC" id="2.7.1.39"/>
    </reaction>
</comment>
<comment type="pathway">
    <text evidence="1">Amino-acid biosynthesis; L-threonine biosynthesis; L-threonine from L-aspartate: step 4/5.</text>
</comment>
<comment type="subcellular location">
    <subcellularLocation>
        <location evidence="1">Cytoplasm</location>
    </subcellularLocation>
</comment>
<comment type="similarity">
    <text evidence="1">Belongs to the GHMP kinase family. Homoserine kinase subfamily.</text>
</comment>
<dbReference type="EC" id="2.7.1.39" evidence="1"/>
<dbReference type="EMBL" id="CP000702">
    <property type="protein sequence ID" value="ABQ46403.1"/>
    <property type="molecule type" value="Genomic_DNA"/>
</dbReference>
<dbReference type="RefSeq" id="WP_011943035.1">
    <property type="nucleotide sequence ID" value="NC_009486.1"/>
</dbReference>
<dbReference type="SMR" id="A5IJN0"/>
<dbReference type="STRING" id="390874.Tpet_0375"/>
<dbReference type="KEGG" id="tpt:Tpet_0375"/>
<dbReference type="eggNOG" id="COG0083">
    <property type="taxonomic scope" value="Bacteria"/>
</dbReference>
<dbReference type="HOGENOM" id="CLU_041243_0_2_0"/>
<dbReference type="UniPathway" id="UPA00050">
    <property type="reaction ID" value="UER00064"/>
</dbReference>
<dbReference type="Proteomes" id="UP000006558">
    <property type="component" value="Chromosome"/>
</dbReference>
<dbReference type="GO" id="GO:0005737">
    <property type="term" value="C:cytoplasm"/>
    <property type="evidence" value="ECO:0007669"/>
    <property type="project" value="UniProtKB-SubCell"/>
</dbReference>
<dbReference type="GO" id="GO:0005524">
    <property type="term" value="F:ATP binding"/>
    <property type="evidence" value="ECO:0007669"/>
    <property type="project" value="UniProtKB-UniRule"/>
</dbReference>
<dbReference type="GO" id="GO:0004413">
    <property type="term" value="F:homoserine kinase activity"/>
    <property type="evidence" value="ECO:0007669"/>
    <property type="project" value="UniProtKB-UniRule"/>
</dbReference>
<dbReference type="GO" id="GO:0009088">
    <property type="term" value="P:threonine biosynthetic process"/>
    <property type="evidence" value="ECO:0007669"/>
    <property type="project" value="UniProtKB-UniRule"/>
</dbReference>
<dbReference type="Gene3D" id="3.30.230.10">
    <property type="match status" value="1"/>
</dbReference>
<dbReference type="Gene3D" id="3.30.70.890">
    <property type="entry name" value="GHMP kinase, C-terminal domain"/>
    <property type="match status" value="1"/>
</dbReference>
<dbReference type="HAMAP" id="MF_00384">
    <property type="entry name" value="Homoser_kinase"/>
    <property type="match status" value="1"/>
</dbReference>
<dbReference type="InterPro" id="IPR036554">
    <property type="entry name" value="GHMP_kinase_C_sf"/>
</dbReference>
<dbReference type="InterPro" id="IPR006204">
    <property type="entry name" value="GHMP_kinase_N_dom"/>
</dbReference>
<dbReference type="InterPro" id="IPR006203">
    <property type="entry name" value="GHMP_knse_ATP-bd_CS"/>
</dbReference>
<dbReference type="InterPro" id="IPR000870">
    <property type="entry name" value="Homoserine_kinase"/>
</dbReference>
<dbReference type="InterPro" id="IPR020568">
    <property type="entry name" value="Ribosomal_Su5_D2-typ_SF"/>
</dbReference>
<dbReference type="InterPro" id="IPR014721">
    <property type="entry name" value="Ribsml_uS5_D2-typ_fold_subgr"/>
</dbReference>
<dbReference type="NCBIfam" id="TIGR00191">
    <property type="entry name" value="thrB"/>
    <property type="match status" value="1"/>
</dbReference>
<dbReference type="PANTHER" id="PTHR20861:SF1">
    <property type="entry name" value="HOMOSERINE KINASE"/>
    <property type="match status" value="1"/>
</dbReference>
<dbReference type="PANTHER" id="PTHR20861">
    <property type="entry name" value="HOMOSERINE/4-DIPHOSPHOCYTIDYL-2-C-METHYL-D-ERYTHRITOL KINASE"/>
    <property type="match status" value="1"/>
</dbReference>
<dbReference type="Pfam" id="PF00288">
    <property type="entry name" value="GHMP_kinases_N"/>
    <property type="match status" value="1"/>
</dbReference>
<dbReference type="PIRSF" id="PIRSF000676">
    <property type="entry name" value="Homoser_kin"/>
    <property type="match status" value="1"/>
</dbReference>
<dbReference type="PRINTS" id="PR00958">
    <property type="entry name" value="HOMSERKINASE"/>
</dbReference>
<dbReference type="SUPFAM" id="SSF55060">
    <property type="entry name" value="GHMP Kinase, C-terminal domain"/>
    <property type="match status" value="1"/>
</dbReference>
<dbReference type="SUPFAM" id="SSF54211">
    <property type="entry name" value="Ribosomal protein S5 domain 2-like"/>
    <property type="match status" value="1"/>
</dbReference>
<dbReference type="PROSITE" id="PS00627">
    <property type="entry name" value="GHMP_KINASES_ATP"/>
    <property type="match status" value="1"/>
</dbReference>
<protein>
    <recommendedName>
        <fullName evidence="1">Homoserine kinase</fullName>
        <shortName evidence="1">HK</shortName>
        <shortName evidence="1">HSK</shortName>
        <ecNumber evidence="1">2.7.1.39</ecNumber>
    </recommendedName>
</protein>
<proteinExistence type="inferred from homology"/>
<sequence>MKVLVPATTTNLGAGFDVFGLALDLFNEVEFSFDTKETTIESTGKYASDLKDHNLFFEVFRFFERKTGYRVPPVRIKQTCNIPVSSGLGSSAAVIVAALHIANEGTGRNLSREDLMKLAVELEGHPDNVVPAFTGGLVVCYQNGSHLDFEKFEIDLSLTFFVPNFSMCTNEMRKILPEKVPFEDAVFNIKNSCQFLAKIAAGKIKEALKYVGDRLHQNYRINGNKKMKEFVEAILSKNPEYWFVSGSGPSVCSNINDFEGIPYLKDVLKLRVNNRGMIVSE</sequence>